<dbReference type="EC" id="1.6.99.1" evidence="1"/>
<dbReference type="EMBL" id="AE016877">
    <property type="protein sequence ID" value="AAP08992.1"/>
    <property type="status" value="ALT_INIT"/>
    <property type="molecule type" value="Genomic_DNA"/>
</dbReference>
<dbReference type="RefSeq" id="NP_831791.1">
    <property type="nucleotide sequence ID" value="NC_004722.1"/>
</dbReference>
<dbReference type="RefSeq" id="WP_001086174.1">
    <property type="nucleotide sequence ID" value="NC_004722.1"/>
</dbReference>
<dbReference type="SMR" id="Q81EF6"/>
<dbReference type="STRING" id="226900.BC_2023"/>
<dbReference type="KEGG" id="bce:BC2023"/>
<dbReference type="PATRIC" id="fig|226900.8.peg.2032"/>
<dbReference type="HOGENOM" id="CLU_012153_2_1_9"/>
<dbReference type="OrthoDB" id="9772736at2"/>
<dbReference type="Proteomes" id="UP000001417">
    <property type="component" value="Chromosome"/>
</dbReference>
<dbReference type="GO" id="GO:0010181">
    <property type="term" value="F:FMN binding"/>
    <property type="evidence" value="ECO:0007669"/>
    <property type="project" value="UniProtKB-UniRule"/>
</dbReference>
<dbReference type="GO" id="GO:0050661">
    <property type="term" value="F:NADP binding"/>
    <property type="evidence" value="ECO:0007669"/>
    <property type="project" value="UniProtKB-UniRule"/>
</dbReference>
<dbReference type="GO" id="GO:0003959">
    <property type="term" value="F:NADPH dehydrogenase activity"/>
    <property type="evidence" value="ECO:0007669"/>
    <property type="project" value="UniProtKB-UniRule"/>
</dbReference>
<dbReference type="GO" id="GO:0009636">
    <property type="term" value="P:response to toxic substance"/>
    <property type="evidence" value="ECO:0007669"/>
    <property type="project" value="UniProtKB-KW"/>
</dbReference>
<dbReference type="CDD" id="cd02932">
    <property type="entry name" value="OYE_YqiM_FMN"/>
    <property type="match status" value="1"/>
</dbReference>
<dbReference type="Gene3D" id="3.20.20.70">
    <property type="entry name" value="Aldolase class I"/>
    <property type="match status" value="1"/>
</dbReference>
<dbReference type="HAMAP" id="MF_01614">
    <property type="entry name" value="NamA"/>
    <property type="match status" value="1"/>
</dbReference>
<dbReference type="InterPro" id="IPR013785">
    <property type="entry name" value="Aldolase_TIM"/>
</dbReference>
<dbReference type="InterPro" id="IPR023663">
    <property type="entry name" value="NADPH_DH_bac"/>
</dbReference>
<dbReference type="InterPro" id="IPR001155">
    <property type="entry name" value="OxRdtase_FMN_N"/>
</dbReference>
<dbReference type="InterPro" id="IPR044152">
    <property type="entry name" value="YqjM-like"/>
</dbReference>
<dbReference type="NCBIfam" id="NF010047">
    <property type="entry name" value="PRK13523.1"/>
    <property type="match status" value="1"/>
</dbReference>
<dbReference type="PANTHER" id="PTHR43303">
    <property type="entry name" value="NADPH DEHYDROGENASE C23G7.10C-RELATED"/>
    <property type="match status" value="1"/>
</dbReference>
<dbReference type="PANTHER" id="PTHR43303:SF4">
    <property type="entry name" value="NADPH DEHYDROGENASE C23G7.10C-RELATED"/>
    <property type="match status" value="1"/>
</dbReference>
<dbReference type="Pfam" id="PF00724">
    <property type="entry name" value="Oxidored_FMN"/>
    <property type="match status" value="1"/>
</dbReference>
<dbReference type="SUPFAM" id="SSF51395">
    <property type="entry name" value="FMN-linked oxidoreductases"/>
    <property type="match status" value="1"/>
</dbReference>
<accession>Q81EF6</accession>
<protein>
    <recommendedName>
        <fullName evidence="1">NADPH dehydrogenase</fullName>
        <ecNumber evidence="1">1.6.99.1</ecNumber>
    </recommendedName>
</protein>
<proteinExistence type="inferred from homology"/>
<organism>
    <name type="scientific">Bacillus cereus (strain ATCC 14579 / DSM 31 / CCUG 7414 / JCM 2152 / NBRC 15305 / NCIMB 9373 / NCTC 2599 / NRRL B-3711)</name>
    <dbReference type="NCBI Taxonomy" id="226900"/>
    <lineage>
        <taxon>Bacteria</taxon>
        <taxon>Bacillati</taxon>
        <taxon>Bacillota</taxon>
        <taxon>Bacilli</taxon>
        <taxon>Bacillales</taxon>
        <taxon>Bacillaceae</taxon>
        <taxon>Bacillus</taxon>
        <taxon>Bacillus cereus group</taxon>
    </lineage>
</organism>
<reference key="1">
    <citation type="journal article" date="2003" name="Nature">
        <title>Genome sequence of Bacillus cereus and comparative analysis with Bacillus anthracis.</title>
        <authorList>
            <person name="Ivanova N."/>
            <person name="Sorokin A."/>
            <person name="Anderson I."/>
            <person name="Galleron N."/>
            <person name="Candelon B."/>
            <person name="Kapatral V."/>
            <person name="Bhattacharyya A."/>
            <person name="Reznik G."/>
            <person name="Mikhailova N."/>
            <person name="Lapidus A."/>
            <person name="Chu L."/>
            <person name="Mazur M."/>
            <person name="Goltsman E."/>
            <person name="Larsen N."/>
            <person name="D'Souza M."/>
            <person name="Walunas T."/>
            <person name="Grechkin Y."/>
            <person name="Pusch G."/>
            <person name="Haselkorn R."/>
            <person name="Fonstein M."/>
            <person name="Ehrlich S.D."/>
            <person name="Overbeek R."/>
            <person name="Kyrpides N.C."/>
        </authorList>
    </citation>
    <scope>NUCLEOTIDE SEQUENCE [LARGE SCALE GENOMIC DNA]</scope>
    <source>
        <strain>ATCC 14579 / DSM 31 / CCUG 7414 / JCM 2152 / NBRC 15305 / NCIMB 9373 / NCTC 2599 / NRRL B-3711</strain>
    </source>
</reference>
<name>NAMA_BACCR</name>
<evidence type="ECO:0000255" key="1">
    <source>
        <dbReference type="HAMAP-Rule" id="MF_01614"/>
    </source>
</evidence>
<evidence type="ECO:0000305" key="2"/>
<feature type="chain" id="PRO_0000216114" description="NADPH dehydrogenase">
    <location>
        <begin position="1"/>
        <end position="345"/>
    </location>
</feature>
<feature type="binding site" evidence="1">
    <location>
        <begin position="23"/>
        <end position="26"/>
    </location>
    <ligand>
        <name>FMN</name>
        <dbReference type="ChEBI" id="CHEBI:58210"/>
    </ligand>
</feature>
<feature type="binding site" evidence="1">
    <location>
        <position position="28"/>
    </location>
    <ligand>
        <name>substrate</name>
    </ligand>
</feature>
<feature type="binding site" evidence="1">
    <location>
        <position position="60"/>
    </location>
    <ligand>
        <name>FMN</name>
        <dbReference type="ChEBI" id="CHEBI:58210"/>
    </ligand>
</feature>
<feature type="binding site" evidence="1">
    <location>
        <position position="102"/>
    </location>
    <ligand>
        <name>FMN</name>
        <dbReference type="ChEBI" id="CHEBI:58210"/>
    </ligand>
</feature>
<feature type="binding site" evidence="1">
    <location>
        <begin position="164"/>
        <end position="167"/>
    </location>
    <ligand>
        <name>substrate</name>
    </ligand>
</feature>
<feature type="binding site" evidence="1">
    <location>
        <position position="215"/>
    </location>
    <ligand>
        <name>FMN</name>
        <dbReference type="ChEBI" id="CHEBI:58210"/>
    </ligand>
</feature>
<feature type="binding site" evidence="1">
    <location>
        <begin position="307"/>
        <end position="308"/>
    </location>
    <ligand>
        <name>FMN</name>
        <dbReference type="ChEBI" id="CHEBI:58210"/>
    </ligand>
</feature>
<gene>
    <name evidence="1" type="primary">namA</name>
    <name type="ordered locus">BC_2023</name>
</gene>
<sequence length="345" mass="38582">MNSKLFSPYTIKNVTLKNRIVMSPMCMYSSGNEDGRVTNFHLIHYGTRAAGQVGLVMVEATAVLAEGRISNNDLGIWDDNLIEGLHKTTTFIHDNGAKAAIQLAHAGRKAELDTNAFAPSAIPFNDKMKIPVEMNIQQIKETILAFQRAALRSKQAGFDVIELHGAHGYLINEFLSPLTNKRTDKYGGSPENRYRFLREIIDSVNEVWDGPIFVRISANDYHPDGLTVQDYVQYTKWMKEQGIDLIDCSSGAVVPAHIDVYPGYQVQYAKHIKEHTNIATGAVGLITTGSQAEQILNNNEADLIFIGRELLRNPYFPRIAANELGFELQEPHQYKRAPGKIHTNK</sequence>
<keyword id="KW-0216">Detoxification</keyword>
<keyword id="KW-0285">Flavoprotein</keyword>
<keyword id="KW-0288">FMN</keyword>
<keyword id="KW-0521">NADP</keyword>
<keyword id="KW-0560">Oxidoreductase</keyword>
<keyword id="KW-1185">Reference proteome</keyword>
<comment type="function">
    <text evidence="1">Catalyzes the reduction of the double bond of an array of alpha,beta-unsaturated aldehydes and ketones. It also reduces the nitro group of nitroester and nitroaromatic compounds. It could have a role in detoxification processes.</text>
</comment>
<comment type="catalytic activity">
    <reaction evidence="1">
        <text>A + NADPH + H(+) = AH2 + NADP(+)</text>
        <dbReference type="Rhea" id="RHEA:13149"/>
        <dbReference type="ChEBI" id="CHEBI:13193"/>
        <dbReference type="ChEBI" id="CHEBI:15378"/>
        <dbReference type="ChEBI" id="CHEBI:17499"/>
        <dbReference type="ChEBI" id="CHEBI:57783"/>
        <dbReference type="ChEBI" id="CHEBI:58349"/>
        <dbReference type="EC" id="1.6.99.1"/>
    </reaction>
</comment>
<comment type="cofactor">
    <cofactor evidence="1">
        <name>FMN</name>
        <dbReference type="ChEBI" id="CHEBI:58210"/>
    </cofactor>
</comment>
<comment type="subunit">
    <text evidence="1">Homotetramer.</text>
</comment>
<comment type="similarity">
    <text evidence="1">Belongs to the NADH:flavin oxidoreductase/NADH oxidase family. NamA subfamily.</text>
</comment>
<comment type="sequence caution" evidence="2">
    <conflict type="erroneous initiation">
        <sequence resource="EMBL-CDS" id="AAP08992"/>
    </conflict>
</comment>